<accession>Q3TYV2</accession>
<sequence>MQSFLLHCPPIRLCMGLACILFLWNAVSGLKGEGKKDKEMALPPATVSGNEGLKKEKNGSFLHAAESVFKEKKMVKGLEVLATTELPARSVDLSTLNLTELVNGMLNRALKDSKQFFSVLSITSYSSFAFHKVSVAIYNISNPKTVDPAKFPTRHCYCLSNRTNDLSDFTALLVDIVGNSTSYLTEIFKSTSILSVTQTNESDCVFICVMVGKSGRNLSDFWEMVEKSPVINYTFTSGVSSVLATTRGTARTSRLTTQSQQSLLRPYSVRWSTQWVSALKSLPWTKTSAPSEKELAESKQMFPELPVGTIGTHSSAPSSSNMTRTPWGTNRYTQAPTVPMPMPLSVDDSTPEGPPWASLPSTSASIEDAQQLRSTGNLLHPTGILTTPSRLAQPSRASGTLMPGTQTTNPTQAPAPRVPQTDGIPAEWPFIPEKEPARDPAAHQVSKCPRPLLQEEAITDTPLPLAMKKLTPCLMELCRFFQQCLCAIQKRDFSSEAISNCYLPEKIRKLITLH</sequence>
<dbReference type="EMBL" id="AK158329">
    <property type="protein sequence ID" value="BAE34460.1"/>
    <property type="molecule type" value="mRNA"/>
</dbReference>
<dbReference type="CCDS" id="CCDS49618.1"/>
<dbReference type="RefSeq" id="NP_001138568.1">
    <property type="nucleotide sequence ID" value="NM_001145096.1"/>
</dbReference>
<dbReference type="STRING" id="10090.ENSMUSP00000098149"/>
<dbReference type="GlyCosmos" id="Q3TYV2">
    <property type="glycosylation" value="9 sites, No reported glycans"/>
</dbReference>
<dbReference type="GlyGen" id="Q3TYV2">
    <property type="glycosylation" value="9 sites"/>
</dbReference>
<dbReference type="iPTMnet" id="Q3TYV2"/>
<dbReference type="PhosphoSitePlus" id="Q3TYV2"/>
<dbReference type="PaxDb" id="10090-ENSMUSP00000098149"/>
<dbReference type="Antibodypedia" id="67806">
    <property type="antibodies" value="18 antibodies from 9 providers"/>
</dbReference>
<dbReference type="Ensembl" id="ENSMUST00000100584.3">
    <property type="protein sequence ID" value="ENSMUSP00000098149.3"/>
    <property type="gene ID" value="ENSMUSG00000072511.4"/>
</dbReference>
<dbReference type="GeneID" id="654498"/>
<dbReference type="KEGG" id="mmu:654498"/>
<dbReference type="UCSC" id="uc007waa.1">
    <property type="organism name" value="mouse"/>
</dbReference>
<dbReference type="AGR" id="MGI:3615329"/>
<dbReference type="CTD" id="10086"/>
<dbReference type="MGI" id="MGI:3615329">
    <property type="gene designation" value="Hhla1"/>
</dbReference>
<dbReference type="VEuPathDB" id="HostDB:ENSMUSG00000072511"/>
<dbReference type="eggNOG" id="ENOG502S3MP">
    <property type="taxonomic scope" value="Eukaryota"/>
</dbReference>
<dbReference type="GeneTree" id="ENSGT00530000064699"/>
<dbReference type="HOGENOM" id="CLU_042998_0_0_1"/>
<dbReference type="InParanoid" id="Q3TYV2"/>
<dbReference type="OrthoDB" id="80726at9989"/>
<dbReference type="PhylomeDB" id="Q3TYV2"/>
<dbReference type="TreeFam" id="TF341554"/>
<dbReference type="BioGRID-ORCS" id="654498">
    <property type="hits" value="4 hits in 78 CRISPR screens"/>
</dbReference>
<dbReference type="ChiTaRS" id="Hhla1">
    <property type="organism name" value="mouse"/>
</dbReference>
<dbReference type="PRO" id="PR:Q3TYV2"/>
<dbReference type="Proteomes" id="UP000000589">
    <property type="component" value="Chromosome 15"/>
</dbReference>
<dbReference type="RNAct" id="Q3TYV2">
    <property type="molecule type" value="protein"/>
</dbReference>
<dbReference type="Bgee" id="ENSMUSG00000072511">
    <property type="expression patterns" value="Expressed in secondary oocyte and 5 other cell types or tissues"/>
</dbReference>
<dbReference type="ExpressionAtlas" id="Q3TYV2">
    <property type="expression patterns" value="baseline and differential"/>
</dbReference>
<dbReference type="GO" id="GO:0005576">
    <property type="term" value="C:extracellular region"/>
    <property type="evidence" value="ECO:0007669"/>
    <property type="project" value="UniProtKB-SubCell"/>
</dbReference>
<dbReference type="InterPro" id="IPR037643">
    <property type="entry name" value="HHLA1"/>
</dbReference>
<dbReference type="PANTHER" id="PTHR15299">
    <property type="entry name" value="HERV-H LTR-ASSOCIATING PROTEIN 1"/>
    <property type="match status" value="1"/>
</dbReference>
<dbReference type="PANTHER" id="PTHR15299:SF3">
    <property type="entry name" value="HERV-H LTR-ASSOCIATING PROTEIN 1"/>
    <property type="match status" value="1"/>
</dbReference>
<feature type="signal peptide" evidence="1">
    <location>
        <begin position="1"/>
        <end position="29"/>
    </location>
</feature>
<feature type="chain" id="PRO_0000394220" description="HERV-H LTR-associating protein 1 homolog">
    <location>
        <begin position="30"/>
        <end position="514"/>
    </location>
</feature>
<feature type="region of interest" description="Disordered" evidence="2">
    <location>
        <begin position="379"/>
        <end position="420"/>
    </location>
</feature>
<feature type="compositionally biased region" description="Polar residues" evidence="2">
    <location>
        <begin position="384"/>
        <end position="398"/>
    </location>
</feature>
<feature type="compositionally biased region" description="Low complexity" evidence="2">
    <location>
        <begin position="403"/>
        <end position="415"/>
    </location>
</feature>
<feature type="glycosylation site" description="N-linked (GlcNAc...) asparagine" evidence="1">
    <location>
        <position position="58"/>
    </location>
</feature>
<feature type="glycosylation site" description="N-linked (GlcNAc...) asparagine" evidence="1">
    <location>
        <position position="97"/>
    </location>
</feature>
<feature type="glycosylation site" description="N-linked (GlcNAc...) asparagine" evidence="1">
    <location>
        <position position="139"/>
    </location>
</feature>
<feature type="glycosylation site" description="N-linked (GlcNAc...) asparagine" evidence="1">
    <location>
        <position position="161"/>
    </location>
</feature>
<feature type="glycosylation site" description="N-linked (GlcNAc...) asparagine" evidence="1">
    <location>
        <position position="179"/>
    </location>
</feature>
<feature type="glycosylation site" description="N-linked (GlcNAc...) asparagine" evidence="1">
    <location>
        <position position="200"/>
    </location>
</feature>
<feature type="glycosylation site" description="N-linked (GlcNAc...) asparagine" evidence="1">
    <location>
        <position position="217"/>
    </location>
</feature>
<feature type="glycosylation site" description="N-linked (GlcNAc...) asparagine" evidence="1">
    <location>
        <position position="232"/>
    </location>
</feature>
<feature type="glycosylation site" description="N-linked (GlcNAc...) asparagine" evidence="1">
    <location>
        <position position="321"/>
    </location>
</feature>
<proteinExistence type="evidence at transcript level"/>
<reference key="1">
    <citation type="journal article" date="2005" name="Science">
        <title>The transcriptional landscape of the mammalian genome.</title>
        <authorList>
            <person name="Carninci P."/>
            <person name="Kasukawa T."/>
            <person name="Katayama S."/>
            <person name="Gough J."/>
            <person name="Frith M.C."/>
            <person name="Maeda N."/>
            <person name="Oyama R."/>
            <person name="Ravasi T."/>
            <person name="Lenhard B."/>
            <person name="Wells C."/>
            <person name="Kodzius R."/>
            <person name="Shimokawa K."/>
            <person name="Bajic V.B."/>
            <person name="Brenner S.E."/>
            <person name="Batalov S."/>
            <person name="Forrest A.R."/>
            <person name="Zavolan M."/>
            <person name="Davis M.J."/>
            <person name="Wilming L.G."/>
            <person name="Aidinis V."/>
            <person name="Allen J.E."/>
            <person name="Ambesi-Impiombato A."/>
            <person name="Apweiler R."/>
            <person name="Aturaliya R.N."/>
            <person name="Bailey T.L."/>
            <person name="Bansal M."/>
            <person name="Baxter L."/>
            <person name="Beisel K.W."/>
            <person name="Bersano T."/>
            <person name="Bono H."/>
            <person name="Chalk A.M."/>
            <person name="Chiu K.P."/>
            <person name="Choudhary V."/>
            <person name="Christoffels A."/>
            <person name="Clutterbuck D.R."/>
            <person name="Crowe M.L."/>
            <person name="Dalla E."/>
            <person name="Dalrymple B.P."/>
            <person name="de Bono B."/>
            <person name="Della Gatta G."/>
            <person name="di Bernardo D."/>
            <person name="Down T."/>
            <person name="Engstrom P."/>
            <person name="Fagiolini M."/>
            <person name="Faulkner G."/>
            <person name="Fletcher C.F."/>
            <person name="Fukushima T."/>
            <person name="Furuno M."/>
            <person name="Futaki S."/>
            <person name="Gariboldi M."/>
            <person name="Georgii-Hemming P."/>
            <person name="Gingeras T.R."/>
            <person name="Gojobori T."/>
            <person name="Green R.E."/>
            <person name="Gustincich S."/>
            <person name="Harbers M."/>
            <person name="Hayashi Y."/>
            <person name="Hensch T.K."/>
            <person name="Hirokawa N."/>
            <person name="Hill D."/>
            <person name="Huminiecki L."/>
            <person name="Iacono M."/>
            <person name="Ikeo K."/>
            <person name="Iwama A."/>
            <person name="Ishikawa T."/>
            <person name="Jakt M."/>
            <person name="Kanapin A."/>
            <person name="Katoh M."/>
            <person name="Kawasawa Y."/>
            <person name="Kelso J."/>
            <person name="Kitamura H."/>
            <person name="Kitano H."/>
            <person name="Kollias G."/>
            <person name="Krishnan S.P."/>
            <person name="Kruger A."/>
            <person name="Kummerfeld S.K."/>
            <person name="Kurochkin I.V."/>
            <person name="Lareau L.F."/>
            <person name="Lazarevic D."/>
            <person name="Lipovich L."/>
            <person name="Liu J."/>
            <person name="Liuni S."/>
            <person name="McWilliam S."/>
            <person name="Madan Babu M."/>
            <person name="Madera M."/>
            <person name="Marchionni L."/>
            <person name="Matsuda H."/>
            <person name="Matsuzawa S."/>
            <person name="Miki H."/>
            <person name="Mignone F."/>
            <person name="Miyake S."/>
            <person name="Morris K."/>
            <person name="Mottagui-Tabar S."/>
            <person name="Mulder N."/>
            <person name="Nakano N."/>
            <person name="Nakauchi H."/>
            <person name="Ng P."/>
            <person name="Nilsson R."/>
            <person name="Nishiguchi S."/>
            <person name="Nishikawa S."/>
            <person name="Nori F."/>
            <person name="Ohara O."/>
            <person name="Okazaki Y."/>
            <person name="Orlando V."/>
            <person name="Pang K.C."/>
            <person name="Pavan W.J."/>
            <person name="Pavesi G."/>
            <person name="Pesole G."/>
            <person name="Petrovsky N."/>
            <person name="Piazza S."/>
            <person name="Reed J."/>
            <person name="Reid J.F."/>
            <person name="Ring B.Z."/>
            <person name="Ringwald M."/>
            <person name="Rost B."/>
            <person name="Ruan Y."/>
            <person name="Salzberg S.L."/>
            <person name="Sandelin A."/>
            <person name="Schneider C."/>
            <person name="Schoenbach C."/>
            <person name="Sekiguchi K."/>
            <person name="Semple C.A."/>
            <person name="Seno S."/>
            <person name="Sessa L."/>
            <person name="Sheng Y."/>
            <person name="Shibata Y."/>
            <person name="Shimada H."/>
            <person name="Shimada K."/>
            <person name="Silva D."/>
            <person name="Sinclair B."/>
            <person name="Sperling S."/>
            <person name="Stupka E."/>
            <person name="Sugiura K."/>
            <person name="Sultana R."/>
            <person name="Takenaka Y."/>
            <person name="Taki K."/>
            <person name="Tammoja K."/>
            <person name="Tan S.L."/>
            <person name="Tang S."/>
            <person name="Taylor M.S."/>
            <person name="Tegner J."/>
            <person name="Teichmann S.A."/>
            <person name="Ueda H.R."/>
            <person name="van Nimwegen E."/>
            <person name="Verardo R."/>
            <person name="Wei C.L."/>
            <person name="Yagi K."/>
            <person name="Yamanishi H."/>
            <person name="Zabarovsky E."/>
            <person name="Zhu S."/>
            <person name="Zimmer A."/>
            <person name="Hide W."/>
            <person name="Bult C."/>
            <person name="Grimmond S.M."/>
            <person name="Teasdale R.D."/>
            <person name="Liu E.T."/>
            <person name="Brusic V."/>
            <person name="Quackenbush J."/>
            <person name="Wahlestedt C."/>
            <person name="Mattick J.S."/>
            <person name="Hume D.A."/>
            <person name="Kai C."/>
            <person name="Sasaki D."/>
            <person name="Tomaru Y."/>
            <person name="Fukuda S."/>
            <person name="Kanamori-Katayama M."/>
            <person name="Suzuki M."/>
            <person name="Aoki J."/>
            <person name="Arakawa T."/>
            <person name="Iida J."/>
            <person name="Imamura K."/>
            <person name="Itoh M."/>
            <person name="Kato T."/>
            <person name="Kawaji H."/>
            <person name="Kawagashira N."/>
            <person name="Kawashima T."/>
            <person name="Kojima M."/>
            <person name="Kondo S."/>
            <person name="Konno H."/>
            <person name="Nakano K."/>
            <person name="Ninomiya N."/>
            <person name="Nishio T."/>
            <person name="Okada M."/>
            <person name="Plessy C."/>
            <person name="Shibata K."/>
            <person name="Shiraki T."/>
            <person name="Suzuki S."/>
            <person name="Tagami M."/>
            <person name="Waki K."/>
            <person name="Watahiki A."/>
            <person name="Okamura-Oho Y."/>
            <person name="Suzuki H."/>
            <person name="Kawai J."/>
            <person name="Hayashizaki Y."/>
        </authorList>
    </citation>
    <scope>NUCLEOTIDE SEQUENCE [LARGE SCALE MRNA]</scope>
    <source>
        <strain>C57BL/6J</strain>
        <tissue>Inner ear</tissue>
    </source>
</reference>
<protein>
    <recommendedName>
        <fullName>HERV-H LTR-associating protein 1 homolog</fullName>
    </recommendedName>
</protein>
<organism>
    <name type="scientific">Mus musculus</name>
    <name type="common">Mouse</name>
    <dbReference type="NCBI Taxonomy" id="10090"/>
    <lineage>
        <taxon>Eukaryota</taxon>
        <taxon>Metazoa</taxon>
        <taxon>Chordata</taxon>
        <taxon>Craniata</taxon>
        <taxon>Vertebrata</taxon>
        <taxon>Euteleostomi</taxon>
        <taxon>Mammalia</taxon>
        <taxon>Eutheria</taxon>
        <taxon>Euarchontoglires</taxon>
        <taxon>Glires</taxon>
        <taxon>Rodentia</taxon>
        <taxon>Myomorpha</taxon>
        <taxon>Muroidea</taxon>
        <taxon>Muridae</taxon>
        <taxon>Murinae</taxon>
        <taxon>Mus</taxon>
        <taxon>Mus</taxon>
    </lineage>
</organism>
<gene>
    <name type="primary">Hhla1</name>
</gene>
<evidence type="ECO:0000255" key="1"/>
<evidence type="ECO:0000256" key="2">
    <source>
        <dbReference type="SAM" id="MobiDB-lite"/>
    </source>
</evidence>
<evidence type="ECO:0000305" key="3"/>
<comment type="subcellular location">
    <subcellularLocation>
        <location evidence="3">Secreted</location>
    </subcellularLocation>
</comment>
<name>HHLA1_MOUSE</name>
<keyword id="KW-0325">Glycoprotein</keyword>
<keyword id="KW-1185">Reference proteome</keyword>
<keyword id="KW-0964">Secreted</keyword>
<keyword id="KW-0732">Signal</keyword>